<feature type="chain" id="PRO_0000127145" description="Class E basic helix-loop-helix protein 40">
    <location>
        <begin position="1"/>
        <end position="411"/>
    </location>
</feature>
<feature type="domain" description="bHLH" evidence="4">
    <location>
        <begin position="52"/>
        <end position="107"/>
    </location>
</feature>
<feature type="domain" description="Orange" evidence="3">
    <location>
        <begin position="142"/>
        <end position="175"/>
    </location>
</feature>
<feature type="region of interest" description="Essential for interaction with BMAL1, E-box binding and repressor activity against the CLOCK-BMAL1 heterodimer" evidence="1">
    <location>
        <begin position="1"/>
        <end position="139"/>
    </location>
</feature>
<feature type="region of interest" description="Disordered" evidence="5">
    <location>
        <begin position="1"/>
        <end position="20"/>
    </location>
</feature>
<feature type="region of interest" description="Necessary for interaction with RXRA and repressor activity against RXRA" evidence="1">
    <location>
        <begin position="75"/>
        <end position="79"/>
    </location>
</feature>
<feature type="region of interest" description="Disordered" evidence="5">
    <location>
        <begin position="227"/>
        <end position="294"/>
    </location>
</feature>
<feature type="compositionally biased region" description="Basic and acidic residues" evidence="5">
    <location>
        <begin position="248"/>
        <end position="271"/>
    </location>
</feature>
<feature type="modified residue" description="Phosphoserine" evidence="2">
    <location>
        <position position="235"/>
    </location>
</feature>
<feature type="modified residue" description="Phosphoserine" evidence="14">
    <location>
        <position position="383"/>
    </location>
</feature>
<feature type="cross-link" description="Glycyl lysine isopeptide (Lys-Gly) (interchain with G-Cter in SUMO1, SUMO2 and SUMO3)" evidence="1">
    <location>
        <position position="159"/>
    </location>
</feature>
<feature type="cross-link" description="Glycyl lysine isopeptide (Lys-Gly) (interchain with G-Cter in SUMO2)" evidence="2">
    <location>
        <position position="167"/>
    </location>
</feature>
<feature type="cross-link" description="Glycyl lysine isopeptide (Lys-Gly) (interchain with G-Cter in SUMO1); alternate" evidence="2">
    <location>
        <position position="279"/>
    </location>
</feature>
<feature type="cross-link" description="Glycyl lysine isopeptide (Lys-Gly) (interchain with G-Cter in SUMO1, SUMO2 and SUMO3); alternate" evidence="1">
    <location>
        <position position="279"/>
    </location>
</feature>
<feature type="cross-link" description="Glycyl lysine isopeptide (Lys-Gly) (interchain with G-Cter in SUMO2); alternate" evidence="2">
    <location>
        <position position="279"/>
    </location>
</feature>
<feature type="cross-link" description="Glycyl lysine isopeptide (Lys-Gly) (interchain with G-Cter in SUMO2)" evidence="2">
    <location>
        <position position="288"/>
    </location>
</feature>
<feature type="sequence conflict" description="In Ref. 2; CAA69169." evidence="13" ref="2">
    <original>K</original>
    <variation>T</variation>
    <location>
        <position position="288"/>
    </location>
</feature>
<reference key="1">
    <citation type="journal article" date="1997" name="Genes Dev.">
        <title>Overexpression of Stra13, a novel retinoic acid-inducible gene of the basic helix-loop-helix family, inhibits mesodermal and promotes neuronal differentiation of P19 cells.</title>
        <authorList>
            <person name="Boudjelal M."/>
            <person name="Taneja R."/>
            <person name="Matsubara S."/>
            <person name="Bouillet P."/>
            <person name="Dolle P."/>
            <person name="Chambon P."/>
        </authorList>
    </citation>
    <scope>NUCLEOTIDE SEQUENCE [MRNA]</scope>
    <scope>FUNCTION</scope>
    <source>
        <tissue>Embryonic carcinoma</tissue>
    </source>
</reference>
<reference key="2">
    <citation type="journal article" date="1997" name="Oncogene">
        <title>Identification of interaction partners for the basic-helix-loop-helix protein E47.</title>
        <authorList>
            <person name="Dear T.N."/>
            <person name="Hainzl T."/>
            <person name="Follo M."/>
            <person name="Nehls M."/>
            <person name="Wilmore H."/>
            <person name="Matena K."/>
            <person name="Boehm T."/>
        </authorList>
    </citation>
    <scope>NUCLEOTIDE SEQUENCE [MRNA]</scope>
    <scope>INTERACTION WITH TCF3/E47</scope>
    <source>
        <strain>BALB/cJ</strain>
    </source>
</reference>
<reference key="3">
    <citation type="submission" date="2001-03" db="EMBL/GenBank/DDBJ databases">
        <title>Isolation of a CD40-activated gene from murine splenic B cells.</title>
        <authorList>
            <person name="O-Wang J."/>
        </authorList>
    </citation>
    <scope>NUCLEOTIDE SEQUENCE [MRNA]</scope>
    <source>
        <strain>C57BL/6J</strain>
        <tissue>Spleen</tissue>
    </source>
</reference>
<reference key="4">
    <citation type="journal article" date="2004" name="Genome Res.">
        <title>The status, quality, and expansion of the NIH full-length cDNA project: the Mammalian Gene Collection (MGC).</title>
        <authorList>
            <consortium name="The MGC Project Team"/>
        </authorList>
    </citation>
    <scope>NUCLEOTIDE SEQUENCE [LARGE SCALE MRNA]</scope>
    <source>
        <tissue>Mammary gland</tissue>
    </source>
</reference>
<reference key="5">
    <citation type="journal article" date="2004" name="Biochem. Biophys. Res. Commun.">
        <title>A novel autofeedback loop of Dec1 transcription involved in circadian rhythm regulation.</title>
        <authorList>
            <person name="Kawamoto T."/>
            <person name="Noshiro M."/>
            <person name="Sato F."/>
            <person name="Maemura K."/>
            <person name="Takeda N."/>
            <person name="Nagai R."/>
            <person name="Iwata T."/>
            <person name="Fujimoto K."/>
            <person name="Furukawa M."/>
            <person name="Miyazaki K."/>
            <person name="Honma S."/>
            <person name="Honma K.I."/>
            <person name="Kato Y."/>
        </authorList>
    </citation>
    <scope>FUNCTION</scope>
</reference>
<reference key="6">
    <citation type="journal article" date="2004" name="Eur. J. Biochem.">
        <title>Functional analysis of the basic helix-loop-helix transcription factor DEC1 in circadian regulation. Interaction with BMAL1.</title>
        <authorList>
            <person name="Sato F."/>
            <person name="Kawamoto T."/>
            <person name="Fujimoto K."/>
            <person name="Noshiro M."/>
            <person name="Honda K.K."/>
            <person name="Honma S."/>
            <person name="Honma K."/>
            <person name="Kato Y."/>
        </authorList>
    </citation>
    <scope>HETERODIMERIZATION WITH BHLHE41/DEC2</scope>
</reference>
<reference key="7">
    <citation type="journal article" date="2008" name="Mol. Cell. Biol.">
        <title>DEC1 modulates the circadian phase of clock gene expression.</title>
        <authorList>
            <person name="Nakashima A."/>
            <person name="Kawamoto T."/>
            <person name="Honda K.K."/>
            <person name="Ueshima T."/>
            <person name="Noshiro M."/>
            <person name="Iwata T."/>
            <person name="Fujimoto K."/>
            <person name="Kubo H."/>
            <person name="Honma S."/>
            <person name="Yorioka N."/>
            <person name="Kohno N."/>
            <person name="Kato Y."/>
        </authorList>
    </citation>
    <scope>FUNCTION</scope>
</reference>
<reference key="8">
    <citation type="journal article" date="2009" name="Mol. Cell. Proteomics">
        <title>Large scale localization of protein phosphorylation by use of electron capture dissociation mass spectrometry.</title>
        <authorList>
            <person name="Sweet S.M."/>
            <person name="Bailey C.M."/>
            <person name="Cunningham D.L."/>
            <person name="Heath J.K."/>
            <person name="Cooper H.J."/>
        </authorList>
    </citation>
    <scope>IDENTIFICATION BY MASS SPECTROMETRY [LARGE SCALE ANALYSIS]</scope>
    <source>
        <tissue>Embryonic fibroblast</tissue>
    </source>
</reference>
<reference key="9">
    <citation type="journal article" date="2009" name="Mol. Pharmacol.">
        <title>The basic helix-loop-helix proteins differentiated embryo chondrocyte (DEC) 1 and DEC2 function as corepressors of retinoid X receptors.</title>
        <authorList>
            <person name="Cho Y."/>
            <person name="Noshiro M."/>
            <person name="Choi M."/>
            <person name="Morita K."/>
            <person name="Kawamoto T."/>
            <person name="Fujimoto K."/>
            <person name="Kato Y."/>
            <person name="Makishima M."/>
        </authorList>
    </citation>
    <scope>FUNCTION</scope>
    <scope>INDUCTION</scope>
</reference>
<reference key="10">
    <citation type="journal article" date="2010" name="Cell">
        <title>A tissue-specific atlas of mouse protein phosphorylation and expression.</title>
        <authorList>
            <person name="Huttlin E.L."/>
            <person name="Jedrychowski M.P."/>
            <person name="Elias J.E."/>
            <person name="Goswami T."/>
            <person name="Rad R."/>
            <person name="Beausoleil S.A."/>
            <person name="Villen J."/>
            <person name="Haas W."/>
            <person name="Sowa M.E."/>
            <person name="Gygi S.P."/>
        </authorList>
    </citation>
    <scope>PHOSPHORYLATION [LARGE SCALE ANALYSIS] AT SER-383</scope>
    <scope>IDENTIFICATION BY MASS SPECTROMETRY [LARGE SCALE ANALYSIS]</scope>
    <source>
        <tissue>Kidney</tissue>
    </source>
</reference>
<reference key="11">
    <citation type="journal article" date="2018" name="Hypertension">
        <title>Dec1 and CLOCK regulate Na+/K+-ATPase beta1 subunit expression and blood pressure.</title>
        <authorList>
            <person name="Nakashima A."/>
            <person name="Kawamoto T."/>
            <person name="Noshiro M."/>
            <person name="Ueno T."/>
            <person name="Doi S."/>
            <person name="Honda K."/>
            <person name="Maruhashi T."/>
            <person name="Noma K."/>
            <person name="Honma S."/>
            <person name="Masaki T."/>
            <person name="Higashi Y."/>
            <person name="Kato Y."/>
        </authorList>
    </citation>
    <scope>FUNCTION</scope>
</reference>
<gene>
    <name type="primary">Bhlhe40</name>
    <name type="synonym">Bhlhb2</name>
    <name type="synonym">Clast5</name>
    <name evidence="12" type="synonym">Dec1</name>
    <name type="synonym">Stra13</name>
</gene>
<keyword id="KW-0090">Biological rhythms</keyword>
<keyword id="KW-0963">Cytoplasm</keyword>
<keyword id="KW-0238">DNA-binding</keyword>
<keyword id="KW-1017">Isopeptide bond</keyword>
<keyword id="KW-0539">Nucleus</keyword>
<keyword id="KW-0597">Phosphoprotein</keyword>
<keyword id="KW-1185">Reference proteome</keyword>
<keyword id="KW-0678">Repressor</keyword>
<keyword id="KW-0804">Transcription</keyword>
<keyword id="KW-0805">Transcription regulation</keyword>
<keyword id="KW-0832">Ubl conjugation</keyword>
<proteinExistence type="evidence at protein level"/>
<comment type="function">
    <text evidence="2 6 7 8 9 11">Transcriptional repressor involved in the regulation of the circadian rhythm by negatively regulating the activity of the clock genes and clock-controlled genes (PubMed:18411297). Acts as the negative limb of a novel autoregulatory feedback loop (DEC loop) which differs from the one formed by the PER and CRY transcriptional repressors (PER/CRY loop) (PubMed:14672706). Both these loops are interlocked as it represses the expression of PER1/2 and in turn is repressed by PER1/2 and CRY1/2 (By similarity). Represses the activity of the circadian transcriptional activator: CLOCK-BMAL1|BMAL2 heterodimer by competing for the binding to E-box elements (5'-CACGTG-3') found within the promoters of its target genes (By similarity). Negatively regulates its own expression and the expression of DBP and BHLHE41/DEC2 (PubMed:14672706). Acts as a corepressor of RXR and the RXR-LXR heterodimers and represses the ligand-induced RXRA and NR1H3/LXRA transactivation activity (PubMed:19786558). May function as a transcriptional factor for neuronal differentiation (PubMed:9284045). Represses the transcription of NR0B2 and attentuates the transactivation of NR0B2 by the CLOCK-BMAL1 complex (By similarity). Drives the circadian rhythm of blood pressure through transcriptional repression of ATP1B1 in the cardiovascular system (PubMed:30012868).</text>
</comment>
<comment type="subunit">
    <text evidence="1 10">Homodimer. Heterodimer with BHLHE41/DEC2. Interacts with ubiquitin-conjugating enzyme UBE2I/UBC9. Interacts with HDAC1, SUMO1, RXRA and BMAL1 (By similarity). Interacts with TCF3/E47.</text>
</comment>
<comment type="subcellular location">
    <subcellularLocation>
        <location evidence="2">Cytoplasm</location>
    </subcellularLocation>
    <subcellularLocation>
        <location evidence="2">Nucleus</location>
    </subcellularLocation>
    <text evidence="2">Predominantly localized in the nucleus (By similarity).</text>
</comment>
<comment type="developmental stage">
    <text>Expressed from 9.5 dpc to 17.5 dpc in the ventricular layer of the brain and spinal cord, but also in the retinal pigment epithelium, developing eyelids, nasal epithelium, serous gland, vibrissae, epithelium of the mouth cavity and the tooth buds. Highly expressed in the heart, thymus and adrenal glands followed by lung, liver parenchyma, kidney tubules, epithelium of the esophagus and stomach. From 15.5 dpc to 17.5 dpc it is expressed in urinary bladder and urethra. From 17.5 dpc, it is expressed in developing muscle.</text>
</comment>
<comment type="induction">
    <text evidence="8">Stimulated by retinoic acid (RA). Expressed in a circadian manner in the liver with a peak at ZT10.</text>
</comment>
<comment type="PTM">
    <text evidence="1">Ubiquitinated; which may lead to proteasomal degradation.</text>
</comment>
<comment type="PTM">
    <text evidence="1">Sumoylation inhibits its ubiquitination and promotes its negative regulation of the CLOCK-BMAL1 heterodimer transcriptional activator activity.</text>
</comment>
<organism>
    <name type="scientific">Mus musculus</name>
    <name type="common">Mouse</name>
    <dbReference type="NCBI Taxonomy" id="10090"/>
    <lineage>
        <taxon>Eukaryota</taxon>
        <taxon>Metazoa</taxon>
        <taxon>Chordata</taxon>
        <taxon>Craniata</taxon>
        <taxon>Vertebrata</taxon>
        <taxon>Euteleostomi</taxon>
        <taxon>Mammalia</taxon>
        <taxon>Eutheria</taxon>
        <taxon>Euarchontoglires</taxon>
        <taxon>Glires</taxon>
        <taxon>Rodentia</taxon>
        <taxon>Myomorpha</taxon>
        <taxon>Muroidea</taxon>
        <taxon>Muridae</taxon>
        <taxon>Murinae</taxon>
        <taxon>Mus</taxon>
        <taxon>Mus</taxon>
    </lineage>
</organism>
<protein>
    <recommendedName>
        <fullName>Class E basic helix-loop-helix protein 40</fullName>
        <shortName>bHLHe40</shortName>
    </recommendedName>
    <alternativeName>
        <fullName>Class B basic helix-loop-helix protein 2</fullName>
        <shortName>bHLHb2</shortName>
    </alternativeName>
    <alternativeName>
        <fullName evidence="12">Differentially expressed in chondrocytes protein 1</fullName>
        <shortName evidence="12">DEC1</shortName>
    </alternativeName>
    <alternativeName>
        <fullName>E47 interaction protein 1</fullName>
        <shortName>EIP1</shortName>
    </alternativeName>
    <alternativeName>
        <fullName>Stimulated by retinoic acid gene 13 protein</fullName>
    </alternativeName>
</protein>
<evidence type="ECO:0000250" key="1"/>
<evidence type="ECO:0000250" key="2">
    <source>
        <dbReference type="UniProtKB" id="O14503"/>
    </source>
</evidence>
<evidence type="ECO:0000255" key="3">
    <source>
        <dbReference type="PROSITE-ProRule" id="PRU00380"/>
    </source>
</evidence>
<evidence type="ECO:0000255" key="4">
    <source>
        <dbReference type="PROSITE-ProRule" id="PRU00981"/>
    </source>
</evidence>
<evidence type="ECO:0000256" key="5">
    <source>
        <dbReference type="SAM" id="MobiDB-lite"/>
    </source>
</evidence>
<evidence type="ECO:0000269" key="6">
    <source>
    </source>
</evidence>
<evidence type="ECO:0000269" key="7">
    <source>
    </source>
</evidence>
<evidence type="ECO:0000269" key="8">
    <source>
    </source>
</evidence>
<evidence type="ECO:0000269" key="9">
    <source>
    </source>
</evidence>
<evidence type="ECO:0000269" key="10">
    <source>
    </source>
</evidence>
<evidence type="ECO:0000269" key="11">
    <source>
    </source>
</evidence>
<evidence type="ECO:0000303" key="12">
    <source>
    </source>
</evidence>
<evidence type="ECO:0000305" key="13"/>
<evidence type="ECO:0007744" key="14">
    <source>
    </source>
</evidence>
<sequence>MERIPSAQPPPTCLPKAPGLEHGDLSGMDFAHMYQVYKSRRGIKRSEDSKETYKLPHRLIEKKRRDRINECIAQLKDLLPEHLKLTTLGHLEKAVVLELTLKHVKALTNLIDQQQQKIIALQSGLQAGDLSGRNLEAGQEMFCSGFQTCAREVLQYLAKHENTRDLKSSQLVTHLHRVVSELLQGGASRKPLDSAPKAVDLKEKPSFLAKGSEGPGKNCVPVIQRTFAPSGGEQSGSDTDTDSGYGGELEKGDLRSEQPYFKSDHGRRFAVGERVSTIKQESEEPPTKKSRMQLSEEEGHFAGSDLMGSPFLGPHPHQPPFCLPFYLIPPSATAYLPMLEKCWYPTSVPVLYPGLNTSAAALSSFMNPDKIPTPLLLPQRLPSPLAHSSLDSSALLQALKQIPPLNLETKD</sequence>
<name>BHE40_MOUSE</name>
<dbReference type="EMBL" id="AF010305">
    <property type="protein sequence ID" value="AAB64228.1"/>
    <property type="molecule type" value="mRNA"/>
</dbReference>
<dbReference type="EMBL" id="Y07836">
    <property type="protein sequence ID" value="CAA69169.1"/>
    <property type="molecule type" value="mRNA"/>
</dbReference>
<dbReference type="EMBL" id="AF364051">
    <property type="protein sequence ID" value="AAK50859.1"/>
    <property type="molecule type" value="mRNA"/>
</dbReference>
<dbReference type="EMBL" id="BC010720">
    <property type="protein sequence ID" value="AAH10720.1"/>
    <property type="molecule type" value="mRNA"/>
</dbReference>
<dbReference type="CCDS" id="CCDS20400.1"/>
<dbReference type="RefSeq" id="NP_035628.1">
    <property type="nucleotide sequence ID" value="NM_011498.4"/>
</dbReference>
<dbReference type="SMR" id="O35185"/>
<dbReference type="BioGRID" id="203554">
    <property type="interactions" value="5"/>
</dbReference>
<dbReference type="CORUM" id="O35185"/>
<dbReference type="FunCoup" id="O35185">
    <property type="interactions" value="2868"/>
</dbReference>
<dbReference type="IntAct" id="O35185">
    <property type="interactions" value="1"/>
</dbReference>
<dbReference type="STRING" id="10090.ENSMUSP00000032194"/>
<dbReference type="iPTMnet" id="O35185"/>
<dbReference type="PhosphoSitePlus" id="O35185"/>
<dbReference type="PaxDb" id="10090-ENSMUSP00000032194"/>
<dbReference type="ProteomicsDB" id="273453"/>
<dbReference type="Antibodypedia" id="10051">
    <property type="antibodies" value="347 antibodies from 33 providers"/>
</dbReference>
<dbReference type="DNASU" id="20893"/>
<dbReference type="Ensembl" id="ENSMUST00000032194.11">
    <property type="protein sequence ID" value="ENSMUSP00000032194.5"/>
    <property type="gene ID" value="ENSMUSG00000030103.12"/>
</dbReference>
<dbReference type="GeneID" id="20893"/>
<dbReference type="KEGG" id="mmu:20893"/>
<dbReference type="UCSC" id="uc009ddn.1">
    <property type="organism name" value="mouse"/>
</dbReference>
<dbReference type="AGR" id="MGI:1097714"/>
<dbReference type="CTD" id="8553"/>
<dbReference type="MGI" id="MGI:1097714">
    <property type="gene designation" value="Bhlhe40"/>
</dbReference>
<dbReference type="VEuPathDB" id="HostDB:ENSMUSG00000030103"/>
<dbReference type="eggNOG" id="KOG4304">
    <property type="taxonomic scope" value="Eukaryota"/>
</dbReference>
<dbReference type="GeneTree" id="ENSGT00940000158384"/>
<dbReference type="HOGENOM" id="CLU_049895_0_1_1"/>
<dbReference type="InParanoid" id="O35185"/>
<dbReference type="OMA" id="GLDFAHM"/>
<dbReference type="OrthoDB" id="690068at2759"/>
<dbReference type="PhylomeDB" id="O35185"/>
<dbReference type="TreeFam" id="TF330859"/>
<dbReference type="BioGRID-ORCS" id="20893">
    <property type="hits" value="9 hits in 81 CRISPR screens"/>
</dbReference>
<dbReference type="ChiTaRS" id="Bhlhe40">
    <property type="organism name" value="mouse"/>
</dbReference>
<dbReference type="PRO" id="PR:O35185"/>
<dbReference type="Proteomes" id="UP000000589">
    <property type="component" value="Chromosome 6"/>
</dbReference>
<dbReference type="RNAct" id="O35185">
    <property type="molecule type" value="protein"/>
</dbReference>
<dbReference type="Bgee" id="ENSMUSG00000030103">
    <property type="expression patterns" value="Expressed in tarsal region and 222 other cell types or tissues"/>
</dbReference>
<dbReference type="ExpressionAtlas" id="O35185">
    <property type="expression patterns" value="baseline and differential"/>
</dbReference>
<dbReference type="GO" id="GO:0005737">
    <property type="term" value="C:cytoplasm"/>
    <property type="evidence" value="ECO:0007669"/>
    <property type="project" value="UniProtKB-SubCell"/>
</dbReference>
<dbReference type="GO" id="GO:0016604">
    <property type="term" value="C:nuclear body"/>
    <property type="evidence" value="ECO:0007669"/>
    <property type="project" value="Ensembl"/>
</dbReference>
<dbReference type="GO" id="GO:0005654">
    <property type="term" value="C:nucleoplasm"/>
    <property type="evidence" value="ECO:0000304"/>
    <property type="project" value="Reactome"/>
</dbReference>
<dbReference type="GO" id="GO:0005634">
    <property type="term" value="C:nucleus"/>
    <property type="evidence" value="ECO:0000314"/>
    <property type="project" value="MGI"/>
</dbReference>
<dbReference type="GO" id="GO:0003677">
    <property type="term" value="F:DNA binding"/>
    <property type="evidence" value="ECO:0000314"/>
    <property type="project" value="MGI"/>
</dbReference>
<dbReference type="GO" id="GO:0000981">
    <property type="term" value="F:DNA-binding transcription factor activity, RNA polymerase II-specific"/>
    <property type="evidence" value="ECO:0000314"/>
    <property type="project" value="BHF-UCL"/>
</dbReference>
<dbReference type="GO" id="GO:0001227">
    <property type="term" value="F:DNA-binding transcription repressor activity, RNA polymerase II-specific"/>
    <property type="evidence" value="ECO:0000314"/>
    <property type="project" value="BHF-UCL"/>
</dbReference>
<dbReference type="GO" id="GO:0070888">
    <property type="term" value="F:E-box binding"/>
    <property type="evidence" value="ECO:0000314"/>
    <property type="project" value="UniProtKB"/>
</dbReference>
<dbReference type="GO" id="GO:0043426">
    <property type="term" value="F:MRF binding"/>
    <property type="evidence" value="ECO:0000314"/>
    <property type="project" value="BHF-UCL"/>
</dbReference>
<dbReference type="GO" id="GO:0019904">
    <property type="term" value="F:protein domain specific binding"/>
    <property type="evidence" value="ECO:0007669"/>
    <property type="project" value="Ensembl"/>
</dbReference>
<dbReference type="GO" id="GO:0046982">
    <property type="term" value="F:protein heterodimerization activity"/>
    <property type="evidence" value="ECO:0007669"/>
    <property type="project" value="Ensembl"/>
</dbReference>
<dbReference type="GO" id="GO:0042803">
    <property type="term" value="F:protein homodimerization activity"/>
    <property type="evidence" value="ECO:0007669"/>
    <property type="project" value="Ensembl"/>
</dbReference>
<dbReference type="GO" id="GO:0000978">
    <property type="term" value="F:RNA polymerase II cis-regulatory region sequence-specific DNA binding"/>
    <property type="evidence" value="ECO:0000314"/>
    <property type="project" value="BHF-UCL"/>
</dbReference>
<dbReference type="GO" id="GO:0061629">
    <property type="term" value="F:RNA polymerase II-specific DNA-binding transcription factor binding"/>
    <property type="evidence" value="ECO:0000314"/>
    <property type="project" value="BHF-UCL"/>
</dbReference>
<dbReference type="GO" id="GO:0032922">
    <property type="term" value="P:circadian regulation of gene expression"/>
    <property type="evidence" value="ECO:0000315"/>
    <property type="project" value="UniProtKB"/>
</dbReference>
<dbReference type="GO" id="GO:0007623">
    <property type="term" value="P:circadian rhythm"/>
    <property type="evidence" value="ECO:0000270"/>
    <property type="project" value="UniProtKB"/>
</dbReference>
<dbReference type="GO" id="GO:0043153">
    <property type="term" value="P:entrainment of circadian clock by photoperiod"/>
    <property type="evidence" value="ECO:0000315"/>
    <property type="project" value="BHF-UCL"/>
</dbReference>
<dbReference type="GO" id="GO:0045892">
    <property type="term" value="P:negative regulation of DNA-templated transcription"/>
    <property type="evidence" value="ECO:0000314"/>
    <property type="project" value="MGI"/>
</dbReference>
<dbReference type="GO" id="GO:0042752">
    <property type="term" value="P:regulation of circadian rhythm"/>
    <property type="evidence" value="ECO:0000315"/>
    <property type="project" value="UniProtKB"/>
</dbReference>
<dbReference type="CDD" id="cd19749">
    <property type="entry name" value="bHLH-O_DEC1"/>
    <property type="match status" value="1"/>
</dbReference>
<dbReference type="FunFam" id="4.10.280.10:FF:000020">
    <property type="entry name" value="class E basic helix-loop-helix protein 40"/>
    <property type="match status" value="1"/>
</dbReference>
<dbReference type="Gene3D" id="6.10.250.980">
    <property type="match status" value="1"/>
</dbReference>
<dbReference type="Gene3D" id="4.10.280.10">
    <property type="entry name" value="Helix-loop-helix DNA-binding domain"/>
    <property type="match status" value="1"/>
</dbReference>
<dbReference type="InterPro" id="IPR011598">
    <property type="entry name" value="bHLH_dom"/>
</dbReference>
<dbReference type="InterPro" id="IPR050370">
    <property type="entry name" value="HES_HEY"/>
</dbReference>
<dbReference type="InterPro" id="IPR036638">
    <property type="entry name" value="HLH_DNA-bd_sf"/>
</dbReference>
<dbReference type="InterPro" id="IPR003650">
    <property type="entry name" value="Orange_dom"/>
</dbReference>
<dbReference type="PANTHER" id="PTHR10985">
    <property type="entry name" value="BASIC HELIX-LOOP-HELIX TRANSCRIPTION FACTOR, HES-RELATED"/>
    <property type="match status" value="1"/>
</dbReference>
<dbReference type="Pfam" id="PF07527">
    <property type="entry name" value="Hairy_orange"/>
    <property type="match status" value="1"/>
</dbReference>
<dbReference type="Pfam" id="PF00010">
    <property type="entry name" value="HLH"/>
    <property type="match status" value="1"/>
</dbReference>
<dbReference type="SMART" id="SM00353">
    <property type="entry name" value="HLH"/>
    <property type="match status" value="1"/>
</dbReference>
<dbReference type="SMART" id="SM00511">
    <property type="entry name" value="ORANGE"/>
    <property type="match status" value="1"/>
</dbReference>
<dbReference type="SUPFAM" id="SSF47459">
    <property type="entry name" value="HLH, helix-loop-helix DNA-binding domain"/>
    <property type="match status" value="1"/>
</dbReference>
<dbReference type="SUPFAM" id="SSF158457">
    <property type="entry name" value="Orange domain-like"/>
    <property type="match status" value="1"/>
</dbReference>
<dbReference type="PROSITE" id="PS50888">
    <property type="entry name" value="BHLH"/>
    <property type="match status" value="1"/>
</dbReference>
<dbReference type="PROSITE" id="PS51054">
    <property type="entry name" value="ORANGE"/>
    <property type="match status" value="1"/>
</dbReference>
<accession>O35185</accession>
<accession>P97289</accession>